<comment type="function">
    <text evidence="1">Oxidative deamination of D-amino acids.</text>
</comment>
<comment type="catalytic activity">
    <reaction evidence="1">
        <text>a D-alpha-amino acid + A + H2O = a 2-oxocarboxylate + AH2 + NH4(+)</text>
        <dbReference type="Rhea" id="RHEA:18125"/>
        <dbReference type="ChEBI" id="CHEBI:13193"/>
        <dbReference type="ChEBI" id="CHEBI:15377"/>
        <dbReference type="ChEBI" id="CHEBI:17499"/>
        <dbReference type="ChEBI" id="CHEBI:28938"/>
        <dbReference type="ChEBI" id="CHEBI:35179"/>
        <dbReference type="ChEBI" id="CHEBI:59871"/>
    </reaction>
</comment>
<comment type="cofactor">
    <cofactor evidence="1">
        <name>FAD</name>
        <dbReference type="ChEBI" id="CHEBI:57692"/>
    </cofactor>
</comment>
<comment type="pathway">
    <text>Amino-acid degradation; D-alanine degradation; NH(3) and pyruvate from D-alanine: step 1/1.</text>
</comment>
<comment type="similarity">
    <text evidence="1">Belongs to the DadA oxidoreductase family.</text>
</comment>
<protein>
    <recommendedName>
        <fullName evidence="1">D-amino acid dehydrogenase</fullName>
        <ecNumber evidence="1">1.4.99.-</ecNumber>
    </recommendedName>
</protein>
<gene>
    <name evidence="1" type="primary">dadA</name>
    <name type="ordered locus">EFER_1766</name>
</gene>
<feature type="chain" id="PRO_1000138655" description="D-amino acid dehydrogenase">
    <location>
        <begin position="1"/>
        <end position="432"/>
    </location>
</feature>
<feature type="binding site" evidence="1">
    <location>
        <begin position="3"/>
        <end position="17"/>
    </location>
    <ligand>
        <name>FAD</name>
        <dbReference type="ChEBI" id="CHEBI:57692"/>
    </ligand>
</feature>
<sequence>MRVVILGSGVVGVTSAWYLSQAGHDVTVIDREPGPALETSAANAGQISPGYAAPWAAPGVPLKAIKWMFQRHAPLAVRLDGTQFQLKWMWQMLRNCDTSHYMENKGRMVRLAEYSRDCLKELRAATGIEYEGRQGGTLQLFRTEQQFENATRDIAVLEDAGVPYQLLESNRLAEVEPALAAVAHKLTGGLRLPNDETGDCQLFTQRLAQMAEQAGVKFRFNTPVDKLLFEGEQIYGVKCGDEVIKADAYVMAFGSYSTAMLKGIVDIPVYPLKGYSLTIPVANEDGAPVSTILDETYKIAITRFDNRIRVGGMAEIVGFNTELLQPRRETLEMVVRDLYPRGGHIEQATFWTGLRPMTPDGTPVVGRTSFKNLWLNTGHGTLGWTMACGSGQLLSDILSGRTPAIPYDDLSVARYSSGFSPARPRHLHGVHN</sequence>
<reference key="1">
    <citation type="journal article" date="2009" name="PLoS Genet.">
        <title>Organised genome dynamics in the Escherichia coli species results in highly diverse adaptive paths.</title>
        <authorList>
            <person name="Touchon M."/>
            <person name="Hoede C."/>
            <person name="Tenaillon O."/>
            <person name="Barbe V."/>
            <person name="Baeriswyl S."/>
            <person name="Bidet P."/>
            <person name="Bingen E."/>
            <person name="Bonacorsi S."/>
            <person name="Bouchier C."/>
            <person name="Bouvet O."/>
            <person name="Calteau A."/>
            <person name="Chiapello H."/>
            <person name="Clermont O."/>
            <person name="Cruveiller S."/>
            <person name="Danchin A."/>
            <person name="Diard M."/>
            <person name="Dossat C."/>
            <person name="Karoui M.E."/>
            <person name="Frapy E."/>
            <person name="Garry L."/>
            <person name="Ghigo J.M."/>
            <person name="Gilles A.M."/>
            <person name="Johnson J."/>
            <person name="Le Bouguenec C."/>
            <person name="Lescat M."/>
            <person name="Mangenot S."/>
            <person name="Martinez-Jehanne V."/>
            <person name="Matic I."/>
            <person name="Nassif X."/>
            <person name="Oztas S."/>
            <person name="Petit M.A."/>
            <person name="Pichon C."/>
            <person name="Rouy Z."/>
            <person name="Ruf C.S."/>
            <person name="Schneider D."/>
            <person name="Tourret J."/>
            <person name="Vacherie B."/>
            <person name="Vallenet D."/>
            <person name="Medigue C."/>
            <person name="Rocha E.P.C."/>
            <person name="Denamur E."/>
        </authorList>
    </citation>
    <scope>NUCLEOTIDE SEQUENCE [LARGE SCALE GENOMIC DNA]</scope>
    <source>
        <strain>ATCC 35469 / DSM 13698 / BCRC 15582 / CCUG 18766 / IAM 14443 / JCM 21226 / LMG 7866 / NBRC 102419 / NCTC 12128 / CDC 0568-73</strain>
    </source>
</reference>
<organism>
    <name type="scientific">Escherichia fergusonii (strain ATCC 35469 / DSM 13698 / CCUG 18766 / IAM 14443 / JCM 21226 / LMG 7866 / NBRC 102419 / NCTC 12128 / CDC 0568-73)</name>
    <dbReference type="NCBI Taxonomy" id="585054"/>
    <lineage>
        <taxon>Bacteria</taxon>
        <taxon>Pseudomonadati</taxon>
        <taxon>Pseudomonadota</taxon>
        <taxon>Gammaproteobacteria</taxon>
        <taxon>Enterobacterales</taxon>
        <taxon>Enterobacteriaceae</taxon>
        <taxon>Escherichia</taxon>
    </lineage>
</organism>
<accession>B7LSJ5</accession>
<evidence type="ECO:0000255" key="1">
    <source>
        <dbReference type="HAMAP-Rule" id="MF_01202"/>
    </source>
</evidence>
<proteinExistence type="inferred from homology"/>
<dbReference type="EC" id="1.4.99.-" evidence="1"/>
<dbReference type="EMBL" id="CU928158">
    <property type="protein sequence ID" value="CAQ89281.1"/>
    <property type="molecule type" value="Genomic_DNA"/>
</dbReference>
<dbReference type="RefSeq" id="WP_001266928.1">
    <property type="nucleotide sequence ID" value="NC_011740.1"/>
</dbReference>
<dbReference type="SMR" id="B7LSJ5"/>
<dbReference type="GeneID" id="75057197"/>
<dbReference type="KEGG" id="efe:EFER_1766"/>
<dbReference type="HOGENOM" id="CLU_007884_9_2_6"/>
<dbReference type="OrthoDB" id="9805337at2"/>
<dbReference type="UniPathway" id="UPA00043">
    <property type="reaction ID" value="UER00498"/>
</dbReference>
<dbReference type="Proteomes" id="UP000000745">
    <property type="component" value="Chromosome"/>
</dbReference>
<dbReference type="GO" id="GO:0005737">
    <property type="term" value="C:cytoplasm"/>
    <property type="evidence" value="ECO:0007669"/>
    <property type="project" value="TreeGrafter"/>
</dbReference>
<dbReference type="GO" id="GO:0005886">
    <property type="term" value="C:plasma membrane"/>
    <property type="evidence" value="ECO:0007669"/>
    <property type="project" value="TreeGrafter"/>
</dbReference>
<dbReference type="GO" id="GO:0008718">
    <property type="term" value="F:D-amino-acid dehydrogenase activity"/>
    <property type="evidence" value="ECO:0007669"/>
    <property type="project" value="UniProtKB-UniRule"/>
</dbReference>
<dbReference type="GO" id="GO:0055130">
    <property type="term" value="P:D-alanine catabolic process"/>
    <property type="evidence" value="ECO:0007669"/>
    <property type="project" value="UniProtKB-UniPathway"/>
</dbReference>
<dbReference type="FunFam" id="3.50.50.60:FF:000020">
    <property type="entry name" value="D-amino acid dehydrogenase"/>
    <property type="match status" value="1"/>
</dbReference>
<dbReference type="Gene3D" id="3.30.9.10">
    <property type="entry name" value="D-Amino Acid Oxidase, subunit A, domain 2"/>
    <property type="match status" value="1"/>
</dbReference>
<dbReference type="Gene3D" id="3.50.50.60">
    <property type="entry name" value="FAD/NAD(P)-binding domain"/>
    <property type="match status" value="2"/>
</dbReference>
<dbReference type="HAMAP" id="MF_01202">
    <property type="entry name" value="DadA"/>
    <property type="match status" value="1"/>
</dbReference>
<dbReference type="InterPro" id="IPR023080">
    <property type="entry name" value="DadA"/>
</dbReference>
<dbReference type="InterPro" id="IPR006076">
    <property type="entry name" value="FAD-dep_OxRdtase"/>
</dbReference>
<dbReference type="InterPro" id="IPR036188">
    <property type="entry name" value="FAD/NAD-bd_sf"/>
</dbReference>
<dbReference type="NCBIfam" id="NF001933">
    <property type="entry name" value="PRK00711.1"/>
    <property type="match status" value="1"/>
</dbReference>
<dbReference type="PANTHER" id="PTHR13847:SF280">
    <property type="entry name" value="D-AMINO ACID DEHYDROGENASE"/>
    <property type="match status" value="1"/>
</dbReference>
<dbReference type="PANTHER" id="PTHR13847">
    <property type="entry name" value="SARCOSINE DEHYDROGENASE-RELATED"/>
    <property type="match status" value="1"/>
</dbReference>
<dbReference type="Pfam" id="PF01266">
    <property type="entry name" value="DAO"/>
    <property type="match status" value="1"/>
</dbReference>
<dbReference type="SUPFAM" id="SSF54373">
    <property type="entry name" value="FAD-linked reductases, C-terminal domain"/>
    <property type="match status" value="1"/>
</dbReference>
<dbReference type="SUPFAM" id="SSF51905">
    <property type="entry name" value="FAD/NAD(P)-binding domain"/>
    <property type="match status" value="1"/>
</dbReference>
<name>DADA_ESCF3</name>
<keyword id="KW-0274">FAD</keyword>
<keyword id="KW-0285">Flavoprotein</keyword>
<keyword id="KW-0560">Oxidoreductase</keyword>